<sequence length="496" mass="52570">MELVVKSVSPETLKTATLVVAVGEGRKLGAAARQVDELSGGAISAVLKRGDLAGKVGQSLLLHSLPNLKAERVLLVGVGKDEELGDRPFRKIVAGILNTLKGLGGSDAVLALDEIIVKNRDSYGKTRLLAETLVDGEYTFDQFKSQKAEPRALKKITLLTIKAAQAEVQRAVNHATAIANGMAFTRNLGNLPPNICHPTFLGEQAKNLGKEFKDLKVEVLDEKKIKSLGMGSFYAVGQGSAQPPRLIVMQYNGGKKSEKPYALVGKGITFDTGGISLKPGAGMDEMKYDMGGAASVFGTLRAVLELKLPINLVCILACAENMPSGTASRPGDIVTTMSGQTVEILNTDAEGRLVLCDALTYSERFKPQAVIDIATLTGACVVALGAHTSGLLGNNDELIEQLLSAGKAADDRAWQLPLFDEYQEQLDSPFADIANIGGPKAGTITAACFLSRFTKNLNWAHLDIAGTAWTSGGKDKGATGRPVPLLTQYLLDRAKA</sequence>
<keyword id="KW-0031">Aminopeptidase</keyword>
<keyword id="KW-0963">Cytoplasm</keyword>
<keyword id="KW-0378">Hydrolase</keyword>
<keyword id="KW-0464">Manganese</keyword>
<keyword id="KW-0479">Metal-binding</keyword>
<keyword id="KW-0645">Protease</keyword>
<reference key="1">
    <citation type="journal article" date="2009" name="Genome Biol.">
        <title>Genomic and genetic analyses of diversity and plant interactions of Pseudomonas fluorescens.</title>
        <authorList>
            <person name="Silby M.W."/>
            <person name="Cerdeno-Tarraga A.M."/>
            <person name="Vernikos G.S."/>
            <person name="Giddens S.R."/>
            <person name="Jackson R.W."/>
            <person name="Preston G.M."/>
            <person name="Zhang X.-X."/>
            <person name="Moon C.D."/>
            <person name="Gehrig S.M."/>
            <person name="Godfrey S.A.C."/>
            <person name="Knight C.G."/>
            <person name="Malone J.G."/>
            <person name="Robinson Z."/>
            <person name="Spiers A.J."/>
            <person name="Harris S."/>
            <person name="Challis G.L."/>
            <person name="Yaxley A.M."/>
            <person name="Harris D."/>
            <person name="Seeger K."/>
            <person name="Murphy L."/>
            <person name="Rutter S."/>
            <person name="Squares R."/>
            <person name="Quail M.A."/>
            <person name="Saunders E."/>
            <person name="Mavromatis K."/>
            <person name="Brettin T.S."/>
            <person name="Bentley S.D."/>
            <person name="Hothersall J."/>
            <person name="Stephens E."/>
            <person name="Thomas C.M."/>
            <person name="Parkhill J."/>
            <person name="Levy S.B."/>
            <person name="Rainey P.B."/>
            <person name="Thomson N.R."/>
        </authorList>
    </citation>
    <scope>NUCLEOTIDE SEQUENCE [LARGE SCALE GENOMIC DNA]</scope>
    <source>
        <strain>Pf0-1</strain>
    </source>
</reference>
<proteinExistence type="inferred from homology"/>
<evidence type="ECO:0000255" key="1">
    <source>
        <dbReference type="HAMAP-Rule" id="MF_00181"/>
    </source>
</evidence>
<name>AMPA_PSEPF</name>
<gene>
    <name evidence="1" type="primary">pepA</name>
    <name type="ordered locus">Pfl01_0989</name>
</gene>
<protein>
    <recommendedName>
        <fullName evidence="1">Probable cytosol aminopeptidase</fullName>
        <ecNumber evidence="1">3.4.11.1</ecNumber>
    </recommendedName>
    <alternativeName>
        <fullName evidence="1">Leucine aminopeptidase</fullName>
        <shortName evidence="1">LAP</shortName>
        <ecNumber evidence="1">3.4.11.10</ecNumber>
    </alternativeName>
    <alternativeName>
        <fullName evidence="1">Leucyl aminopeptidase</fullName>
    </alternativeName>
</protein>
<comment type="function">
    <text evidence="1">Presumably involved in the processing and regular turnover of intracellular proteins. Catalyzes the removal of unsubstituted N-terminal amino acids from various peptides.</text>
</comment>
<comment type="catalytic activity">
    <reaction evidence="1">
        <text>Release of an N-terminal amino acid, Xaa-|-Yaa-, in which Xaa is preferably Leu, but may be other amino acids including Pro although not Arg or Lys, and Yaa may be Pro. Amino acid amides and methyl esters are also readily hydrolyzed, but rates on arylamides are exceedingly low.</text>
        <dbReference type="EC" id="3.4.11.1"/>
    </reaction>
</comment>
<comment type="catalytic activity">
    <reaction evidence="1">
        <text>Release of an N-terminal amino acid, preferentially leucine, but not glutamic or aspartic acids.</text>
        <dbReference type="EC" id="3.4.11.10"/>
    </reaction>
</comment>
<comment type="cofactor">
    <cofactor evidence="1">
        <name>Mn(2+)</name>
        <dbReference type="ChEBI" id="CHEBI:29035"/>
    </cofactor>
    <text evidence="1">Binds 2 manganese ions per subunit.</text>
</comment>
<comment type="subcellular location">
    <subcellularLocation>
        <location evidence="1">Cytoplasm</location>
    </subcellularLocation>
</comment>
<comment type="similarity">
    <text evidence="1">Belongs to the peptidase M17 family.</text>
</comment>
<accession>Q3KHM4</accession>
<organism>
    <name type="scientific">Pseudomonas fluorescens (strain Pf0-1)</name>
    <dbReference type="NCBI Taxonomy" id="205922"/>
    <lineage>
        <taxon>Bacteria</taxon>
        <taxon>Pseudomonadati</taxon>
        <taxon>Pseudomonadota</taxon>
        <taxon>Gammaproteobacteria</taxon>
        <taxon>Pseudomonadales</taxon>
        <taxon>Pseudomonadaceae</taxon>
        <taxon>Pseudomonas</taxon>
    </lineage>
</organism>
<feature type="chain" id="PRO_1000019958" description="Probable cytosol aminopeptidase">
    <location>
        <begin position="1"/>
        <end position="496"/>
    </location>
</feature>
<feature type="active site" evidence="1">
    <location>
        <position position="278"/>
    </location>
</feature>
<feature type="active site" evidence="1">
    <location>
        <position position="352"/>
    </location>
</feature>
<feature type="binding site" evidence="1">
    <location>
        <position position="266"/>
    </location>
    <ligand>
        <name>Mn(2+)</name>
        <dbReference type="ChEBI" id="CHEBI:29035"/>
        <label>2</label>
    </ligand>
</feature>
<feature type="binding site" evidence="1">
    <location>
        <position position="271"/>
    </location>
    <ligand>
        <name>Mn(2+)</name>
        <dbReference type="ChEBI" id="CHEBI:29035"/>
        <label>1</label>
    </ligand>
</feature>
<feature type="binding site" evidence="1">
    <location>
        <position position="271"/>
    </location>
    <ligand>
        <name>Mn(2+)</name>
        <dbReference type="ChEBI" id="CHEBI:29035"/>
        <label>2</label>
    </ligand>
</feature>
<feature type="binding site" evidence="1">
    <location>
        <position position="289"/>
    </location>
    <ligand>
        <name>Mn(2+)</name>
        <dbReference type="ChEBI" id="CHEBI:29035"/>
        <label>2</label>
    </ligand>
</feature>
<feature type="binding site" evidence="1">
    <location>
        <position position="348"/>
    </location>
    <ligand>
        <name>Mn(2+)</name>
        <dbReference type="ChEBI" id="CHEBI:29035"/>
        <label>1</label>
    </ligand>
</feature>
<feature type="binding site" evidence="1">
    <location>
        <position position="350"/>
    </location>
    <ligand>
        <name>Mn(2+)</name>
        <dbReference type="ChEBI" id="CHEBI:29035"/>
        <label>1</label>
    </ligand>
</feature>
<feature type="binding site" evidence="1">
    <location>
        <position position="350"/>
    </location>
    <ligand>
        <name>Mn(2+)</name>
        <dbReference type="ChEBI" id="CHEBI:29035"/>
        <label>2</label>
    </ligand>
</feature>
<dbReference type="EC" id="3.4.11.1" evidence="1"/>
<dbReference type="EC" id="3.4.11.10" evidence="1"/>
<dbReference type="EMBL" id="CP000094">
    <property type="protein sequence ID" value="ABA72732.1"/>
    <property type="molecule type" value="Genomic_DNA"/>
</dbReference>
<dbReference type="RefSeq" id="WP_011332584.1">
    <property type="nucleotide sequence ID" value="NC_007492.2"/>
</dbReference>
<dbReference type="SMR" id="Q3KHM4"/>
<dbReference type="MEROPS" id="M17.003"/>
<dbReference type="KEGG" id="pfo:Pfl01_0989"/>
<dbReference type="eggNOG" id="COG0260">
    <property type="taxonomic scope" value="Bacteria"/>
</dbReference>
<dbReference type="HOGENOM" id="CLU_013734_2_2_6"/>
<dbReference type="Proteomes" id="UP000002704">
    <property type="component" value="Chromosome"/>
</dbReference>
<dbReference type="GO" id="GO:0005737">
    <property type="term" value="C:cytoplasm"/>
    <property type="evidence" value="ECO:0007669"/>
    <property type="project" value="UniProtKB-SubCell"/>
</dbReference>
<dbReference type="GO" id="GO:0030145">
    <property type="term" value="F:manganese ion binding"/>
    <property type="evidence" value="ECO:0007669"/>
    <property type="project" value="UniProtKB-UniRule"/>
</dbReference>
<dbReference type="GO" id="GO:0070006">
    <property type="term" value="F:metalloaminopeptidase activity"/>
    <property type="evidence" value="ECO:0007669"/>
    <property type="project" value="InterPro"/>
</dbReference>
<dbReference type="GO" id="GO:0006508">
    <property type="term" value="P:proteolysis"/>
    <property type="evidence" value="ECO:0007669"/>
    <property type="project" value="UniProtKB-KW"/>
</dbReference>
<dbReference type="CDD" id="cd00433">
    <property type="entry name" value="Peptidase_M17"/>
    <property type="match status" value="1"/>
</dbReference>
<dbReference type="FunFam" id="3.40.630.10:FF:000004">
    <property type="entry name" value="Probable cytosol aminopeptidase"/>
    <property type="match status" value="1"/>
</dbReference>
<dbReference type="Gene3D" id="3.40.220.10">
    <property type="entry name" value="Leucine Aminopeptidase, subunit E, domain 1"/>
    <property type="match status" value="1"/>
</dbReference>
<dbReference type="Gene3D" id="3.40.630.10">
    <property type="entry name" value="Zn peptidases"/>
    <property type="match status" value="1"/>
</dbReference>
<dbReference type="HAMAP" id="MF_00181">
    <property type="entry name" value="Cytosol_peptidase_M17"/>
    <property type="match status" value="1"/>
</dbReference>
<dbReference type="InterPro" id="IPR011356">
    <property type="entry name" value="Leucine_aapep/pepB"/>
</dbReference>
<dbReference type="InterPro" id="IPR043472">
    <property type="entry name" value="Macro_dom-like"/>
</dbReference>
<dbReference type="InterPro" id="IPR000819">
    <property type="entry name" value="Peptidase_M17_C"/>
</dbReference>
<dbReference type="InterPro" id="IPR023042">
    <property type="entry name" value="Peptidase_M17_leu_NH2_pept"/>
</dbReference>
<dbReference type="InterPro" id="IPR008283">
    <property type="entry name" value="Peptidase_M17_N"/>
</dbReference>
<dbReference type="NCBIfam" id="NF002073">
    <property type="entry name" value="PRK00913.1-2"/>
    <property type="match status" value="1"/>
</dbReference>
<dbReference type="NCBIfam" id="NF002074">
    <property type="entry name" value="PRK00913.1-4"/>
    <property type="match status" value="1"/>
</dbReference>
<dbReference type="NCBIfam" id="NF002077">
    <property type="entry name" value="PRK00913.2-4"/>
    <property type="match status" value="1"/>
</dbReference>
<dbReference type="NCBIfam" id="NF002083">
    <property type="entry name" value="PRK00913.3-5"/>
    <property type="match status" value="1"/>
</dbReference>
<dbReference type="PANTHER" id="PTHR11963:SF23">
    <property type="entry name" value="CYTOSOL AMINOPEPTIDASE"/>
    <property type="match status" value="1"/>
</dbReference>
<dbReference type="PANTHER" id="PTHR11963">
    <property type="entry name" value="LEUCINE AMINOPEPTIDASE-RELATED"/>
    <property type="match status" value="1"/>
</dbReference>
<dbReference type="Pfam" id="PF00883">
    <property type="entry name" value="Peptidase_M17"/>
    <property type="match status" value="1"/>
</dbReference>
<dbReference type="Pfam" id="PF02789">
    <property type="entry name" value="Peptidase_M17_N"/>
    <property type="match status" value="1"/>
</dbReference>
<dbReference type="PRINTS" id="PR00481">
    <property type="entry name" value="LAMNOPPTDASE"/>
</dbReference>
<dbReference type="SUPFAM" id="SSF52949">
    <property type="entry name" value="Macro domain-like"/>
    <property type="match status" value="1"/>
</dbReference>
<dbReference type="SUPFAM" id="SSF53187">
    <property type="entry name" value="Zn-dependent exopeptidases"/>
    <property type="match status" value="1"/>
</dbReference>
<dbReference type="PROSITE" id="PS00631">
    <property type="entry name" value="CYTOSOL_AP"/>
    <property type="match status" value="1"/>
</dbReference>